<sequence>MASLNYRQLLTNSYTVNLSDEIQEIGSAKAQNVTINPGPFAQTGYAPVNWGAGETNDSTTVEPLLDGPYQPTTFNPPTSYWVLLAPTVEGVIIQGTNNTDRWLATILIEPNVQTTNRTYNLFGQQVTLSVDNTSQTQWKFIDVSKTTLTGNYTQHGPLFSTPKLYAVMKFSGRIYTYNGTTPNATTGYYSTTNYDTVNMTSFCDFYIIPRNQEEKCTEYINHGLPPIQNTRNVVPVSLSAREIVHTRAQVNEDIVVSKTSLWKEMQYNRDITIRFKFDRTIIKAGGLGYKWSEISFKPITYQYTYTRDGEQITAHTTCSVNGVNNFSYNGGSLPTDFAISRYEVIKENSFVYIDYWDDSQAFRNMVYVRSLAANLNTVTCTGGSYSFALPLGNYPVMTGGTVTLHPAGVTLSTQFTDFVSLNSLRFRFRLTVGEPSFSITRTRVSRLYGLPAANPNNQREHYEISGRLSLISLVPSNDDYQTPIMNSVTVRQDLERQLGELRDEFNSLSQQIAMSQLIDLALLPLDMFSMFSGIKSTIDAAKSMATNVMKRFKRSNLASSVSTLTDAMSDAASSISRSSSIRSIGSSASAWTEVSTSITDISTTVDTVSTQTATIAKRLRLKEIATQTDGMNFDDISAAVLKTKIDKSAQITPSTLPEIVTEASEKFIPNRTYRVINNDEVFEAGMDGKFFAYRVDTFDEIPFDVQKFADLVTDSPVISAIIDLKTLKNLKDNYGISKQQAFDLLRSDPKVLREFINQNNPIIRNRIENLIMQCRL</sequence>
<evidence type="ECO:0000255" key="1">
    <source>
        <dbReference type="HAMAP-Rule" id="MF_04132"/>
    </source>
</evidence>
<evidence type="ECO:0000269" key="2">
    <source>
    </source>
</evidence>
<evidence type="ECO:0000303" key="3">
    <source>
    </source>
</evidence>
<organism>
    <name type="scientific">Rotavirus A (strain RVA/Pig/Mexico/YM/1983/G11P9[7])</name>
    <name type="common">RV-A</name>
    <dbReference type="NCBI Taxonomy" id="10919"/>
    <lineage>
        <taxon>Viruses</taxon>
        <taxon>Riboviria</taxon>
        <taxon>Orthornavirae</taxon>
        <taxon>Duplornaviricota</taxon>
        <taxon>Resentoviricetes</taxon>
        <taxon>Reovirales</taxon>
        <taxon>Sedoreoviridae</taxon>
        <taxon>Rotavirus</taxon>
        <taxon>Rotavirus A</taxon>
    </lineage>
</organism>
<keyword id="KW-0167">Capsid protein</keyword>
<keyword id="KW-0175">Coiled coil</keyword>
<keyword id="KW-1015">Disulfide bond</keyword>
<keyword id="KW-0348">Hemagglutinin</keyword>
<keyword id="KW-1032">Host cell membrane</keyword>
<keyword id="KW-1035">Host cytoplasm</keyword>
<keyword id="KW-1037">Host cytoskeleton</keyword>
<keyword id="KW-1038">Host endoplasmic reticulum</keyword>
<keyword id="KW-1043">Host membrane</keyword>
<keyword id="KW-0945">Host-virus interaction</keyword>
<keyword id="KW-0472">Membrane</keyword>
<keyword id="KW-1152">Outer capsid protein</keyword>
<keyword id="KW-1161">Viral attachment to host cell</keyword>
<keyword id="KW-1162">Viral penetration into host cytoplasm</keyword>
<keyword id="KW-1173">Viral penetration via permeabilization of host membrane</keyword>
<keyword id="KW-0946">Virion</keyword>
<keyword id="KW-1160">Virus entry into host cell</keyword>
<dbReference type="EMBL" id="M63231">
    <property type="protein sequence ID" value="AAA47100.1"/>
    <property type="molecule type" value="Genomic_RNA"/>
</dbReference>
<dbReference type="PIR" id="A40342">
    <property type="entry name" value="VPXRYM"/>
</dbReference>
<dbReference type="SMR" id="P25174"/>
<dbReference type="GO" id="GO:0044172">
    <property type="term" value="C:host cell endoplasmic reticulum-Golgi intermediate compartment"/>
    <property type="evidence" value="ECO:0007669"/>
    <property type="project" value="UniProtKB-SubCell"/>
</dbReference>
<dbReference type="GO" id="GO:0020002">
    <property type="term" value="C:host cell plasma membrane"/>
    <property type="evidence" value="ECO:0007669"/>
    <property type="project" value="UniProtKB-SubCell"/>
</dbReference>
<dbReference type="GO" id="GO:0044168">
    <property type="term" value="C:host cell rough endoplasmic reticulum"/>
    <property type="evidence" value="ECO:0007669"/>
    <property type="project" value="UniProtKB-SubCell"/>
</dbReference>
<dbReference type="GO" id="GO:0044163">
    <property type="term" value="C:host cytoskeleton"/>
    <property type="evidence" value="ECO:0007669"/>
    <property type="project" value="UniProtKB-SubCell"/>
</dbReference>
<dbReference type="GO" id="GO:0016020">
    <property type="term" value="C:membrane"/>
    <property type="evidence" value="ECO:0007669"/>
    <property type="project" value="UniProtKB-KW"/>
</dbReference>
<dbReference type="GO" id="GO:0039624">
    <property type="term" value="C:viral outer capsid"/>
    <property type="evidence" value="ECO:0007669"/>
    <property type="project" value="UniProtKB-UniRule"/>
</dbReference>
<dbReference type="GO" id="GO:0039665">
    <property type="term" value="P:permeabilization of host organelle membrane involved in viral entry into host cell"/>
    <property type="evidence" value="ECO:0007669"/>
    <property type="project" value="UniProtKB-UniRule"/>
</dbReference>
<dbReference type="GO" id="GO:0019062">
    <property type="term" value="P:virion attachment to host cell"/>
    <property type="evidence" value="ECO:0007669"/>
    <property type="project" value="UniProtKB-UniRule"/>
</dbReference>
<dbReference type="Gene3D" id="1.20.5.170">
    <property type="match status" value="1"/>
</dbReference>
<dbReference type="Gene3D" id="2.60.120.200">
    <property type="match status" value="1"/>
</dbReference>
<dbReference type="HAMAP" id="MF_04132">
    <property type="entry name" value="Rota_A_VP4"/>
    <property type="match status" value="1"/>
</dbReference>
<dbReference type="HAMAP" id="MF_04125">
    <property type="entry name" value="Rota_VP4"/>
    <property type="match status" value="1"/>
</dbReference>
<dbReference type="InterPro" id="IPR013320">
    <property type="entry name" value="ConA-like_dom_sf"/>
</dbReference>
<dbReference type="InterPro" id="IPR042546">
    <property type="entry name" value="Rota_A_VP4"/>
</dbReference>
<dbReference type="InterPro" id="IPR035330">
    <property type="entry name" value="Rota_VP4_MID"/>
</dbReference>
<dbReference type="InterPro" id="IPR038017">
    <property type="entry name" value="Rota_VP4_MID_sf"/>
</dbReference>
<dbReference type="InterPro" id="IPR000416">
    <property type="entry name" value="VP4_concanavalin-like"/>
</dbReference>
<dbReference type="InterPro" id="IPR035329">
    <property type="entry name" value="VP4_helical"/>
</dbReference>
<dbReference type="Pfam" id="PF17477">
    <property type="entry name" value="Rota_VP4_MID"/>
    <property type="match status" value="1"/>
</dbReference>
<dbReference type="Pfam" id="PF00426">
    <property type="entry name" value="VP4_haemagglut"/>
    <property type="match status" value="1"/>
</dbReference>
<dbReference type="Pfam" id="PF17478">
    <property type="entry name" value="VP4_helical"/>
    <property type="match status" value="1"/>
</dbReference>
<dbReference type="SUPFAM" id="SSF49899">
    <property type="entry name" value="Concanavalin A-like lectins/glucanases"/>
    <property type="match status" value="1"/>
</dbReference>
<dbReference type="SUPFAM" id="SSF111379">
    <property type="entry name" value="VP4 membrane interaction domain"/>
    <property type="match status" value="1"/>
</dbReference>
<comment type="function">
    <molecule>Outer capsid protein VP4</molecule>
    <text evidence="1">Spike-forming protein that mediates virion attachment to the host epithelial cell receptors and plays a major role in cell penetration, determination of host range restriction and virulence. Rotavirus attachment and entry into the host cell probably involves multiple sequential contacts between the outer capsid proteins VP4 and VP7, and the cell receptors. It is subsequently lost, together with VP7, following virus entry into the host cell. Following entry into the host cell, low intracellular or intravesicular Ca(2+) concentration probably causes the calcium-stabilized VP7 trimers to dissociate from the virion. This step is probably necessary for the membrane-disrupting entry step and the release of VP4, which is locked onto the virion by VP7. During the virus exit from the host cell, VP4 seems to be required to target the newly formed virions to the host cell lipid rafts.</text>
</comment>
<comment type="function">
    <molecule>Outer capsid protein VP5*</molecule>
    <text evidence="1">Forms the spike 'foot' and 'body' and acts as a membrane permeabilization protein that mediates release of viral particles from endosomal compartments into the cytoplasm. During entry, the part of VP5* that protrudes from the virus folds back on itself and reorganizes from a local dimer to a trimer. This reorganization may be linked to membrane penetration by exposing VP5* hydrophobic region. In integrin-dependent strains, VP5* targets the integrin heterodimer ITGA2/ITGB1 for cell attachment.</text>
</comment>
<comment type="function">
    <molecule>Outer capsid protein VP8*</molecule>
    <text evidence="1">Forms the head of the spikes and mediates the recognition of specific host cell surface glycans. It is the viral hemagglutinin and an important target of neutralizing antibodies. In sialic acid-dependent strains, VP8* binds to host cell sialic acid, most probably a ganglioside, providing the initial contact. In some other strains, VP8* mediates the attachment to histo-blood group antigens (HBGAs) for viral entry.</text>
</comment>
<comment type="subunit">
    <molecule>Outer capsid protein VP4</molecule>
    <text evidence="1">Homotrimer. VP4 adopts a dimeric appearance above the capsid surface, while forming a trimeric base anchored inside the capsid layer. Only hints of the third molecule are observed above the capsid surface. It probably performs a series of molecular rearrangements during viral entry. Prior to trypsin cleavage, it is flexible. The priming trypsin cleavage triggers its rearrangement into rigid spikes with approximate two-fold symmetry of their protruding parts. After an unknown second triggering event, cleaved VP4 may undergo another rearrangement, in which two VP5* subunits fold back on themselves and join a third subunit to form a tightly associated trimer, shaped like a folded umbrella. Interacts with VP6. Interacts with VP7.</text>
</comment>
<comment type="subunit">
    <molecule>Outer capsid protein VP5*</molecule>
    <text evidence="1">Homotrimer. The trimer is coiled-coil stabilized by its C-terminus, however, its N-terminus, known as antigen domain or 'body', seems to be flexible allowing it to self-associate either as a dimer or a trimer.</text>
</comment>
<comment type="subcellular location">
    <molecule>Outer capsid protein VP4</molecule>
    <subcellularLocation>
        <location evidence="1">Virion</location>
    </subcellularLocation>
    <subcellularLocation>
        <location evidence="1">Host rough endoplasmic reticulum</location>
    </subcellularLocation>
    <subcellularLocation>
        <location evidence="1">Host cell membrane</location>
    </subcellularLocation>
    <subcellularLocation>
        <location evidence="1">Host cytoplasm</location>
        <location evidence="1">Host cytoskeleton</location>
    </subcellularLocation>
    <subcellularLocation>
        <location evidence="1">Host endoplasmic reticulum-Golgi intermediate compartment</location>
    </subcellularLocation>
    <text evidence="1">The outer layer contains 180 copies of VP4, grouped as 60 dimers. Immature double-layered particles assembled in the cytoplasm bud across the membrane of the endoplasmic reticulum, acquiring during this process a transient lipid membrane that is modified with the ER resident viral glycoproteins NSP4 and VP7; these enveloped particles also contain VP4. As the particles move towards the interior of the ER cisternae, the transient lipid membrane and the non-structural protein NSP4 are lost, while the virus surface proteins VP4 and VP7 rearrange to form the outermost virus protein layer, yielding mature infectious triple-layered particles. VP4 also seems to associate with lipid rafts of the host cell membrane probably for the exit of the virus from the infected cell by an alternate pathway.</text>
</comment>
<comment type="subcellular location">
    <molecule>Outer capsid protein VP8*</molecule>
    <subcellularLocation>
        <location evidence="1">Virion</location>
    </subcellularLocation>
    <text evidence="1">Outer capsid protein.</text>
</comment>
<comment type="subcellular location">
    <molecule>Outer capsid protein VP5*</molecule>
    <subcellularLocation>
        <location evidence="1">Virion</location>
    </subcellularLocation>
    <text evidence="1">Outer capsid protein.</text>
</comment>
<comment type="domain">
    <molecule>Outer capsid protein VP4</molecule>
    <text evidence="1">The VP4 spike is divided into a foot, a stalk and body, and a head.</text>
</comment>
<comment type="PTM">
    <molecule>Outer capsid protein VP4</molecule>
    <text evidence="1">Proteolytic cleavage by trypsin results in activation of VP4 functions and greatly increases infectivity. The penetration into the host cell is dependent on trypsin treatment of VP4. It produces two peptides, VP5* and VP8* that remain associated with the virion. Cleavage of VP4 by trypsin probably occurs in vivo in the lumen of the intestine prior to infection of enterocytes. Trypsin seems to be incorporated into the three-layered viral particles but remains inactive as long as the viral outer capsid is intact and would only be activated upon the solubilization of the latter.</text>
</comment>
<comment type="miscellaneous">
    <text evidence="1">In group A rotaviruses, VP4 defines the P serotype.</text>
</comment>
<comment type="miscellaneous">
    <text evidence="1">Some rotavirus strains are neuraminidase-sensitive and require sialic acid to attach to the cell surface. Some rotavirus strains are integrin-dependent. Some rotavirus strains depend on ganglioside for their entry into the host cell. Hsp70 also seems to be involved in the entry of some strains.</text>
</comment>
<comment type="miscellaneous">
    <text evidence="1 2 3">This strain probably uses sialic acid to attach to the host cell.</text>
</comment>
<comment type="similarity">
    <text evidence="1">Belongs to the rotavirus VP4 family.</text>
</comment>
<proteinExistence type="inferred from homology"/>
<name>VP4_ROTPY</name>
<accession>P25174</accession>
<reference key="1">
    <citation type="journal article" date="1991" name="J. Virol.">
        <title>Rotavirus YM gene 4: analysis of its deduced amino acid sequence and prediction of the secondary structure of the VP4 protein.</title>
        <authorList>
            <person name="Lopez S."/>
            <person name="Lopez I.V."/>
            <person name="Romero P."/>
            <person name="Mendez E."/>
            <person name="Soberon X."/>
            <person name="Arias C.F."/>
        </authorList>
    </citation>
    <scope>NUCLEOTIDE SEQUENCE [GENOMIC RNA]</scope>
</reference>
<reference key="2">
    <citation type="journal article" date="2002" name="J. Virol.">
        <title>Initial interaction of rotavirus strains with N-acetylneuraminic (sialic) acid residues on the cell surface correlates with VP4 genotype, not species of origin.</title>
        <authorList>
            <person name="Ciarlet M."/>
            <person name="Ludert J.E."/>
            <person name="Iturriza-Gomara M."/>
            <person name="Liprandi F."/>
            <person name="Gray J.J."/>
            <person name="Desselberger U."/>
            <person name="Estes M.K."/>
        </authorList>
    </citation>
    <scope>SIALIC ACID DEPENDENCY</scope>
</reference>
<reference key="3">
    <citation type="journal article" date="2006" name="Glycoconj. J.">
        <title>Role of sialic acids in rotavirus infection.</title>
        <authorList>
            <person name="Isa P."/>
            <person name="Arias C.F."/>
            <person name="Lopez S."/>
        </authorList>
    </citation>
    <scope>REVIEW</scope>
</reference>
<organismHost>
    <name type="scientific">Sus scrofa</name>
    <name type="common">Pig</name>
    <dbReference type="NCBI Taxonomy" id="9823"/>
</organismHost>
<protein>
    <recommendedName>
        <fullName evidence="1">Outer capsid protein VP4</fullName>
    </recommendedName>
    <alternativeName>
        <fullName evidence="1">Hemagglutinin</fullName>
    </alternativeName>
    <component>
        <recommendedName>
            <fullName evidence="1">Outer capsid protein VP8*</fullName>
        </recommendedName>
    </component>
    <component>
        <recommendedName>
            <fullName evidence="1">Outer capsid protein VP5*</fullName>
        </recommendedName>
    </component>
</protein>
<feature type="chain" id="PRO_0000041105" description="Outer capsid protein VP4" evidence="1">
    <location>
        <begin position="1"/>
        <end position="776"/>
    </location>
</feature>
<feature type="chain" id="PRO_0000041106" description="Outer capsid protein VP8*" evidence="1">
    <location>
        <begin position="1"/>
        <end position="231"/>
    </location>
</feature>
<feature type="chain" id="PRO_0000041107" description="Outer capsid protein VP5*" evidence="1">
    <location>
        <begin position="248"/>
        <end position="776"/>
    </location>
</feature>
<feature type="region of interest" description="Spike head" evidence="1">
    <location>
        <begin position="65"/>
        <end position="224"/>
    </location>
</feature>
<feature type="region of interest" description="Spike body and stalk (antigen domain)" evidence="1">
    <location>
        <begin position="248"/>
        <end position="479"/>
    </location>
</feature>
<feature type="region of interest" description="Hydrophobic; possible role in virus entry into host cell" evidence="1">
    <location>
        <begin position="389"/>
        <end position="409"/>
    </location>
</feature>
<feature type="region of interest" description="Spike foot" evidence="1">
    <location>
        <begin position="510"/>
        <end position="776"/>
    </location>
</feature>
<feature type="coiled-coil region" evidence="1">
    <location>
        <begin position="484"/>
        <end position="518"/>
    </location>
</feature>
<feature type="short sequence motif" description="DGE motif; interaction with ITGA2/ITGB1 heterodimer" evidence="1">
    <location>
        <begin position="308"/>
        <end position="310"/>
    </location>
</feature>
<feature type="short sequence motif" description="YGL motif; interaction with ITGA4" evidence="1">
    <location>
        <begin position="448"/>
        <end position="450"/>
    </location>
</feature>
<feature type="short sequence motif" description="KID motif; interaction with HSPA8" evidence="1">
    <location>
        <begin position="644"/>
        <end position="646"/>
    </location>
</feature>
<feature type="site" description="Binding to sialic acid" evidence="1">
    <location>
        <position position="101"/>
    </location>
</feature>
<feature type="site" description="Binding to sialic acid" evidence="1">
    <location>
        <position position="190"/>
    </location>
</feature>
<feature type="site" description="Cleavage" evidence="1">
    <location>
        <begin position="231"/>
        <end position="232"/>
    </location>
</feature>
<feature type="site" description="Cleavage" evidence="1">
    <location>
        <begin position="241"/>
        <end position="242"/>
    </location>
</feature>
<feature type="site" description="Cleavage; associated with enhancement of infectivity" evidence="1">
    <location>
        <begin position="247"/>
        <end position="248"/>
    </location>
</feature>
<feature type="disulfide bond" evidence="1">
    <location>
        <begin position="203"/>
        <end position="216"/>
    </location>
</feature>
<feature type="disulfide bond" evidence="1">
    <location>
        <begin position="318"/>
        <end position="380"/>
    </location>
</feature>